<sequence>MDEKIETRLIGATMQSNEPDLERSIRPKRLSDYIGQAAVREQMDIFIRAATNRREALDHVLIFGPPGLGKTTLAHIIAHEMQAGLKQTSGPVLEKAGDLAALLTNLEPHDVLFIDEIHRLNPAIEEVLYPALEDFQLDIIIGEGPSARSIKLDLPPFTLVGATTRAGLLTSPLRDRFGIVQRLEFYRIPDLIHIVKRAAHILNVVIDENGAGEIARRSRGTPRIANRLLRRVRDFAEVRANGMINESIAKEALDLLNVDIRGLDVMDRKLLETIIKKFQGGPVGIESLAAAISEERGTIEDVIEPYLIQEGFILRTPRGRIATELTYQHFKLPLPTQSTLQENFDLLGKVE</sequence>
<proteinExistence type="inferred from homology"/>
<protein>
    <recommendedName>
        <fullName evidence="1">Holliday junction branch migration complex subunit RuvB</fullName>
        <ecNumber evidence="1">3.6.4.-</ecNumber>
    </recommendedName>
</protein>
<gene>
    <name evidence="1" type="primary">ruvB</name>
    <name type="ordered locus">CbuG_0442</name>
</gene>
<dbReference type="EC" id="3.6.4.-" evidence="1"/>
<dbReference type="EMBL" id="CP001019">
    <property type="protein sequence ID" value="ACJ17870.1"/>
    <property type="molecule type" value="Genomic_DNA"/>
</dbReference>
<dbReference type="RefSeq" id="WP_012569763.1">
    <property type="nucleotide sequence ID" value="NC_011527.1"/>
</dbReference>
<dbReference type="SMR" id="B6IYU2"/>
<dbReference type="KEGG" id="cbg:CbuG_0442"/>
<dbReference type="HOGENOM" id="CLU_055599_1_0_6"/>
<dbReference type="GO" id="GO:0005737">
    <property type="term" value="C:cytoplasm"/>
    <property type="evidence" value="ECO:0007669"/>
    <property type="project" value="UniProtKB-SubCell"/>
</dbReference>
<dbReference type="GO" id="GO:0048476">
    <property type="term" value="C:Holliday junction resolvase complex"/>
    <property type="evidence" value="ECO:0007669"/>
    <property type="project" value="UniProtKB-UniRule"/>
</dbReference>
<dbReference type="GO" id="GO:0005524">
    <property type="term" value="F:ATP binding"/>
    <property type="evidence" value="ECO:0007669"/>
    <property type="project" value="UniProtKB-UniRule"/>
</dbReference>
<dbReference type="GO" id="GO:0016887">
    <property type="term" value="F:ATP hydrolysis activity"/>
    <property type="evidence" value="ECO:0007669"/>
    <property type="project" value="InterPro"/>
</dbReference>
<dbReference type="GO" id="GO:0000400">
    <property type="term" value="F:four-way junction DNA binding"/>
    <property type="evidence" value="ECO:0007669"/>
    <property type="project" value="UniProtKB-UniRule"/>
</dbReference>
<dbReference type="GO" id="GO:0009378">
    <property type="term" value="F:four-way junction helicase activity"/>
    <property type="evidence" value="ECO:0007669"/>
    <property type="project" value="InterPro"/>
</dbReference>
<dbReference type="GO" id="GO:0006310">
    <property type="term" value="P:DNA recombination"/>
    <property type="evidence" value="ECO:0007669"/>
    <property type="project" value="UniProtKB-UniRule"/>
</dbReference>
<dbReference type="GO" id="GO:0006281">
    <property type="term" value="P:DNA repair"/>
    <property type="evidence" value="ECO:0007669"/>
    <property type="project" value="UniProtKB-UniRule"/>
</dbReference>
<dbReference type="CDD" id="cd00009">
    <property type="entry name" value="AAA"/>
    <property type="match status" value="1"/>
</dbReference>
<dbReference type="FunFam" id="1.10.8.60:FF:000023">
    <property type="entry name" value="Holliday junction ATP-dependent DNA helicase RuvB"/>
    <property type="match status" value="1"/>
</dbReference>
<dbReference type="FunFam" id="3.40.50.300:FF:000073">
    <property type="entry name" value="Holliday junction ATP-dependent DNA helicase RuvB"/>
    <property type="match status" value="1"/>
</dbReference>
<dbReference type="Gene3D" id="1.10.8.60">
    <property type="match status" value="1"/>
</dbReference>
<dbReference type="Gene3D" id="3.40.50.300">
    <property type="entry name" value="P-loop containing nucleotide triphosphate hydrolases"/>
    <property type="match status" value="1"/>
</dbReference>
<dbReference type="Gene3D" id="1.10.10.10">
    <property type="entry name" value="Winged helix-like DNA-binding domain superfamily/Winged helix DNA-binding domain"/>
    <property type="match status" value="1"/>
</dbReference>
<dbReference type="HAMAP" id="MF_00016">
    <property type="entry name" value="DNA_HJ_migration_RuvB"/>
    <property type="match status" value="1"/>
</dbReference>
<dbReference type="InterPro" id="IPR003593">
    <property type="entry name" value="AAA+_ATPase"/>
</dbReference>
<dbReference type="InterPro" id="IPR041445">
    <property type="entry name" value="AAA_lid_4"/>
</dbReference>
<dbReference type="InterPro" id="IPR004605">
    <property type="entry name" value="DNA_helicase_Holl-junc_RuvB"/>
</dbReference>
<dbReference type="InterPro" id="IPR027417">
    <property type="entry name" value="P-loop_NTPase"/>
</dbReference>
<dbReference type="InterPro" id="IPR008824">
    <property type="entry name" value="RuvB-like_N"/>
</dbReference>
<dbReference type="InterPro" id="IPR008823">
    <property type="entry name" value="RuvB_C"/>
</dbReference>
<dbReference type="InterPro" id="IPR036388">
    <property type="entry name" value="WH-like_DNA-bd_sf"/>
</dbReference>
<dbReference type="InterPro" id="IPR036390">
    <property type="entry name" value="WH_DNA-bd_sf"/>
</dbReference>
<dbReference type="NCBIfam" id="NF000868">
    <property type="entry name" value="PRK00080.1"/>
    <property type="match status" value="1"/>
</dbReference>
<dbReference type="NCBIfam" id="TIGR00635">
    <property type="entry name" value="ruvB"/>
    <property type="match status" value="1"/>
</dbReference>
<dbReference type="PANTHER" id="PTHR42848">
    <property type="match status" value="1"/>
</dbReference>
<dbReference type="PANTHER" id="PTHR42848:SF1">
    <property type="entry name" value="HOLLIDAY JUNCTION BRANCH MIGRATION COMPLEX SUBUNIT RUVB"/>
    <property type="match status" value="1"/>
</dbReference>
<dbReference type="Pfam" id="PF17864">
    <property type="entry name" value="AAA_lid_4"/>
    <property type="match status" value="1"/>
</dbReference>
<dbReference type="Pfam" id="PF05491">
    <property type="entry name" value="RuvB_C"/>
    <property type="match status" value="1"/>
</dbReference>
<dbReference type="Pfam" id="PF05496">
    <property type="entry name" value="RuvB_N"/>
    <property type="match status" value="1"/>
</dbReference>
<dbReference type="SMART" id="SM00382">
    <property type="entry name" value="AAA"/>
    <property type="match status" value="1"/>
</dbReference>
<dbReference type="SUPFAM" id="SSF52540">
    <property type="entry name" value="P-loop containing nucleoside triphosphate hydrolases"/>
    <property type="match status" value="1"/>
</dbReference>
<dbReference type="SUPFAM" id="SSF46785">
    <property type="entry name" value="Winged helix' DNA-binding domain"/>
    <property type="match status" value="1"/>
</dbReference>
<reference key="1">
    <citation type="journal article" date="2009" name="Infect. Immun.">
        <title>Comparative genomics reveal extensive transposon-mediated genomic plasticity and diversity among potential effector proteins within the genus Coxiella.</title>
        <authorList>
            <person name="Beare P.A."/>
            <person name="Unsworth N."/>
            <person name="Andoh M."/>
            <person name="Voth D.E."/>
            <person name="Omsland A."/>
            <person name="Gilk S.D."/>
            <person name="Williams K.P."/>
            <person name="Sobral B.W."/>
            <person name="Kupko J.J. III"/>
            <person name="Porcella S.F."/>
            <person name="Samuel J.E."/>
            <person name="Heinzen R.A."/>
        </authorList>
    </citation>
    <scope>NUCLEOTIDE SEQUENCE [LARGE SCALE GENOMIC DNA]</scope>
    <source>
        <strain>CbuG_Q212</strain>
    </source>
</reference>
<feature type="chain" id="PRO_1000089636" description="Holliday junction branch migration complex subunit RuvB">
    <location>
        <begin position="1"/>
        <end position="351"/>
    </location>
</feature>
<feature type="region of interest" description="Large ATPase domain (RuvB-L)" evidence="1">
    <location>
        <begin position="1"/>
        <end position="186"/>
    </location>
</feature>
<feature type="region of interest" description="Small ATPAse domain (RuvB-S)" evidence="1">
    <location>
        <begin position="187"/>
        <end position="257"/>
    </location>
</feature>
<feature type="region of interest" description="Head domain (RuvB-H)" evidence="1">
    <location>
        <begin position="260"/>
        <end position="351"/>
    </location>
</feature>
<feature type="binding site" evidence="1">
    <location>
        <position position="25"/>
    </location>
    <ligand>
        <name>ATP</name>
        <dbReference type="ChEBI" id="CHEBI:30616"/>
    </ligand>
</feature>
<feature type="binding site" evidence="1">
    <location>
        <position position="26"/>
    </location>
    <ligand>
        <name>ATP</name>
        <dbReference type="ChEBI" id="CHEBI:30616"/>
    </ligand>
</feature>
<feature type="binding site" evidence="1">
    <location>
        <position position="67"/>
    </location>
    <ligand>
        <name>ATP</name>
        <dbReference type="ChEBI" id="CHEBI:30616"/>
    </ligand>
</feature>
<feature type="binding site" evidence="1">
    <location>
        <position position="70"/>
    </location>
    <ligand>
        <name>ATP</name>
        <dbReference type="ChEBI" id="CHEBI:30616"/>
    </ligand>
</feature>
<feature type="binding site" evidence="1">
    <location>
        <position position="71"/>
    </location>
    <ligand>
        <name>ATP</name>
        <dbReference type="ChEBI" id="CHEBI:30616"/>
    </ligand>
</feature>
<feature type="binding site" evidence="1">
    <location>
        <position position="71"/>
    </location>
    <ligand>
        <name>Mg(2+)</name>
        <dbReference type="ChEBI" id="CHEBI:18420"/>
    </ligand>
</feature>
<feature type="binding site" evidence="1">
    <location>
        <position position="72"/>
    </location>
    <ligand>
        <name>ATP</name>
        <dbReference type="ChEBI" id="CHEBI:30616"/>
    </ligand>
</feature>
<feature type="binding site" evidence="1">
    <location>
        <begin position="133"/>
        <end position="135"/>
    </location>
    <ligand>
        <name>ATP</name>
        <dbReference type="ChEBI" id="CHEBI:30616"/>
    </ligand>
</feature>
<feature type="binding site" evidence="1">
    <location>
        <position position="176"/>
    </location>
    <ligand>
        <name>ATP</name>
        <dbReference type="ChEBI" id="CHEBI:30616"/>
    </ligand>
</feature>
<feature type="binding site" evidence="1">
    <location>
        <position position="186"/>
    </location>
    <ligand>
        <name>ATP</name>
        <dbReference type="ChEBI" id="CHEBI:30616"/>
    </ligand>
</feature>
<feature type="binding site" evidence="1">
    <location>
        <position position="223"/>
    </location>
    <ligand>
        <name>ATP</name>
        <dbReference type="ChEBI" id="CHEBI:30616"/>
    </ligand>
</feature>
<feature type="binding site" evidence="1">
    <location>
        <position position="296"/>
    </location>
    <ligand>
        <name>DNA</name>
        <dbReference type="ChEBI" id="CHEBI:16991"/>
    </ligand>
</feature>
<feature type="binding site" evidence="1">
    <location>
        <position position="315"/>
    </location>
    <ligand>
        <name>DNA</name>
        <dbReference type="ChEBI" id="CHEBI:16991"/>
    </ligand>
</feature>
<feature type="binding site" evidence="1">
    <location>
        <position position="320"/>
    </location>
    <ligand>
        <name>DNA</name>
        <dbReference type="ChEBI" id="CHEBI:16991"/>
    </ligand>
</feature>
<evidence type="ECO:0000255" key="1">
    <source>
        <dbReference type="HAMAP-Rule" id="MF_00016"/>
    </source>
</evidence>
<comment type="function">
    <text evidence="1">The RuvA-RuvB-RuvC complex processes Holliday junction (HJ) DNA during genetic recombination and DNA repair, while the RuvA-RuvB complex plays an important role in the rescue of blocked DNA replication forks via replication fork reversal (RFR). RuvA specifically binds to HJ cruciform DNA, conferring on it an open structure. The RuvB hexamer acts as an ATP-dependent pump, pulling dsDNA into and through the RuvAB complex. RuvB forms 2 homohexamers on either side of HJ DNA bound by 1 or 2 RuvA tetramers; 4 subunits per hexamer contact DNA at a time. Coordinated motions by a converter formed by DNA-disengaged RuvB subunits stimulates ATP hydrolysis and nucleotide exchange. Immobilization of the converter enables RuvB to convert the ATP-contained energy into a lever motion, pulling 2 nucleotides of DNA out of the RuvA tetramer per ATP hydrolyzed, thus driving DNA branch migration. The RuvB motors rotate together with the DNA substrate, which together with the progressing nucleotide cycle form the mechanistic basis for DNA recombination by continuous HJ branch migration. Branch migration allows RuvC to scan DNA until it finds its consensus sequence, where it cleaves and resolves cruciform DNA.</text>
</comment>
<comment type="catalytic activity">
    <reaction evidence="1">
        <text>ATP + H2O = ADP + phosphate + H(+)</text>
        <dbReference type="Rhea" id="RHEA:13065"/>
        <dbReference type="ChEBI" id="CHEBI:15377"/>
        <dbReference type="ChEBI" id="CHEBI:15378"/>
        <dbReference type="ChEBI" id="CHEBI:30616"/>
        <dbReference type="ChEBI" id="CHEBI:43474"/>
        <dbReference type="ChEBI" id="CHEBI:456216"/>
    </reaction>
</comment>
<comment type="subunit">
    <text evidence="1">Homohexamer. Forms an RuvA(8)-RuvB(12)-Holliday junction (HJ) complex. HJ DNA is sandwiched between 2 RuvA tetramers; dsDNA enters through RuvA and exits via RuvB. An RuvB hexamer assembles on each DNA strand where it exits the tetramer. Each RuvB hexamer is contacted by two RuvA subunits (via domain III) on 2 adjacent RuvB subunits; this complex drives branch migration. In the full resolvosome a probable DNA-RuvA(4)-RuvB(12)-RuvC(2) complex forms which resolves the HJ.</text>
</comment>
<comment type="subcellular location">
    <subcellularLocation>
        <location evidence="1">Cytoplasm</location>
    </subcellularLocation>
</comment>
<comment type="domain">
    <text evidence="1">Has 3 domains, the large (RuvB-L) and small ATPase (RuvB-S) domains and the C-terminal head (RuvB-H) domain. The head domain binds DNA, while the ATPase domains jointly bind ATP, ADP or are empty depending on the state of the subunit in the translocation cycle. During a single DNA translocation step the structure of each domain remains the same, but their relative positions change.</text>
</comment>
<comment type="similarity">
    <text evidence="1">Belongs to the RuvB family.</text>
</comment>
<name>RUVB_COXB2</name>
<accession>B6IYU2</accession>
<organism>
    <name type="scientific">Coxiella burnetii (strain CbuG_Q212)</name>
    <name type="common">Coxiella burnetii (strain Q212)</name>
    <dbReference type="NCBI Taxonomy" id="434923"/>
    <lineage>
        <taxon>Bacteria</taxon>
        <taxon>Pseudomonadati</taxon>
        <taxon>Pseudomonadota</taxon>
        <taxon>Gammaproteobacteria</taxon>
        <taxon>Legionellales</taxon>
        <taxon>Coxiellaceae</taxon>
        <taxon>Coxiella</taxon>
    </lineage>
</organism>
<keyword id="KW-0067">ATP-binding</keyword>
<keyword id="KW-0963">Cytoplasm</keyword>
<keyword id="KW-0227">DNA damage</keyword>
<keyword id="KW-0233">DNA recombination</keyword>
<keyword id="KW-0234">DNA repair</keyword>
<keyword id="KW-0238">DNA-binding</keyword>
<keyword id="KW-0378">Hydrolase</keyword>
<keyword id="KW-0547">Nucleotide-binding</keyword>